<feature type="chain" id="PRO_0000242311" description="Phosphomethylpyrimidine synthase">
    <location>
        <begin position="1"/>
        <end position="427"/>
    </location>
</feature>
<feature type="binding site" evidence="1">
    <location>
        <position position="66"/>
    </location>
    <ligand>
        <name>substrate</name>
    </ligand>
</feature>
<feature type="binding site" evidence="1">
    <location>
        <position position="95"/>
    </location>
    <ligand>
        <name>substrate</name>
    </ligand>
</feature>
<feature type="binding site" evidence="1">
    <location>
        <position position="124"/>
    </location>
    <ligand>
        <name>substrate</name>
    </ligand>
</feature>
<feature type="binding site" evidence="1">
    <location>
        <position position="163"/>
    </location>
    <ligand>
        <name>substrate</name>
    </ligand>
</feature>
<feature type="binding site" evidence="1">
    <location>
        <begin position="185"/>
        <end position="187"/>
    </location>
    <ligand>
        <name>substrate</name>
    </ligand>
</feature>
<feature type="binding site" evidence="1">
    <location>
        <begin position="226"/>
        <end position="229"/>
    </location>
    <ligand>
        <name>substrate</name>
    </ligand>
</feature>
<feature type="binding site" evidence="1">
    <location>
        <position position="265"/>
    </location>
    <ligand>
        <name>substrate</name>
    </ligand>
</feature>
<feature type="binding site" evidence="1">
    <location>
        <position position="269"/>
    </location>
    <ligand>
        <name>Zn(2+)</name>
        <dbReference type="ChEBI" id="CHEBI:29105"/>
    </ligand>
</feature>
<feature type="binding site" evidence="1">
    <location>
        <position position="292"/>
    </location>
    <ligand>
        <name>substrate</name>
    </ligand>
</feature>
<feature type="binding site" evidence="1">
    <location>
        <position position="333"/>
    </location>
    <ligand>
        <name>Zn(2+)</name>
        <dbReference type="ChEBI" id="CHEBI:29105"/>
    </ligand>
</feature>
<feature type="binding site" evidence="1">
    <location>
        <position position="409"/>
    </location>
    <ligand>
        <name>[4Fe-4S] cluster</name>
        <dbReference type="ChEBI" id="CHEBI:49883"/>
        <note>4Fe-4S-S-AdoMet</note>
    </ligand>
</feature>
<feature type="binding site" evidence="1">
    <location>
        <position position="412"/>
    </location>
    <ligand>
        <name>[4Fe-4S] cluster</name>
        <dbReference type="ChEBI" id="CHEBI:49883"/>
        <note>4Fe-4S-S-AdoMet</note>
    </ligand>
</feature>
<feature type="binding site" evidence="1">
    <location>
        <position position="416"/>
    </location>
    <ligand>
        <name>[4Fe-4S] cluster</name>
        <dbReference type="ChEBI" id="CHEBI:49883"/>
        <note>4Fe-4S-S-AdoMet</note>
    </ligand>
</feature>
<gene>
    <name evidence="1" type="primary">thiC</name>
    <name type="ordered locus">SYNAS_12670</name>
    <name type="ORF">SYN_01520</name>
</gene>
<comment type="function">
    <text evidence="1">Catalyzes the synthesis of the hydroxymethylpyrimidine phosphate (HMP-P) moiety of thiamine from aminoimidazole ribotide (AIR) in a radical S-adenosyl-L-methionine (SAM)-dependent reaction.</text>
</comment>
<comment type="catalytic activity">
    <reaction evidence="1">
        <text>5-amino-1-(5-phospho-beta-D-ribosyl)imidazole + S-adenosyl-L-methionine = 4-amino-2-methyl-5-(phosphooxymethyl)pyrimidine + CO + 5'-deoxyadenosine + formate + L-methionine + 3 H(+)</text>
        <dbReference type="Rhea" id="RHEA:24840"/>
        <dbReference type="ChEBI" id="CHEBI:15378"/>
        <dbReference type="ChEBI" id="CHEBI:15740"/>
        <dbReference type="ChEBI" id="CHEBI:17245"/>
        <dbReference type="ChEBI" id="CHEBI:17319"/>
        <dbReference type="ChEBI" id="CHEBI:57844"/>
        <dbReference type="ChEBI" id="CHEBI:58354"/>
        <dbReference type="ChEBI" id="CHEBI:59789"/>
        <dbReference type="ChEBI" id="CHEBI:137981"/>
        <dbReference type="EC" id="4.1.99.17"/>
    </reaction>
</comment>
<comment type="cofactor">
    <cofactor evidence="1">
        <name>[4Fe-4S] cluster</name>
        <dbReference type="ChEBI" id="CHEBI:49883"/>
    </cofactor>
    <text evidence="1">Binds 1 [4Fe-4S] cluster per subunit. The cluster is coordinated with 3 cysteines and an exchangeable S-adenosyl-L-methionine.</text>
</comment>
<comment type="pathway">
    <text evidence="1">Cofactor biosynthesis; thiamine diphosphate biosynthesis.</text>
</comment>
<comment type="subunit">
    <text evidence="1">Homodimer.</text>
</comment>
<comment type="similarity">
    <text evidence="1">Belongs to the ThiC family.</text>
</comment>
<protein>
    <recommendedName>
        <fullName evidence="1">Phosphomethylpyrimidine synthase</fullName>
        <ecNumber evidence="1">4.1.99.17</ecNumber>
    </recommendedName>
    <alternativeName>
        <fullName evidence="1">Hydroxymethylpyrimidine phosphate synthase</fullName>
        <shortName evidence="1">HMP-P synthase</shortName>
        <shortName evidence="1">HMP-phosphate synthase</shortName>
        <shortName evidence="1">HMPP synthase</shortName>
    </alternativeName>
    <alternativeName>
        <fullName evidence="1">Thiamine biosynthesis protein ThiC</fullName>
    </alternativeName>
</protein>
<dbReference type="EC" id="4.1.99.17" evidence="1"/>
<dbReference type="EMBL" id="CP000252">
    <property type="protein sequence ID" value="ABC77146.1"/>
    <property type="molecule type" value="Genomic_DNA"/>
</dbReference>
<dbReference type="RefSeq" id="WP_011417175.1">
    <property type="nucleotide sequence ID" value="NC_007759.1"/>
</dbReference>
<dbReference type="SMR" id="Q2LSU0"/>
<dbReference type="FunCoup" id="Q2LSU0">
    <property type="interactions" value="427"/>
</dbReference>
<dbReference type="STRING" id="56780.SYN_01520"/>
<dbReference type="KEGG" id="sat:SYN_01520"/>
<dbReference type="eggNOG" id="COG0422">
    <property type="taxonomic scope" value="Bacteria"/>
</dbReference>
<dbReference type="HOGENOM" id="CLU_013181_2_2_7"/>
<dbReference type="InParanoid" id="Q2LSU0"/>
<dbReference type="OrthoDB" id="9805897at2"/>
<dbReference type="UniPathway" id="UPA00060"/>
<dbReference type="Proteomes" id="UP000001933">
    <property type="component" value="Chromosome"/>
</dbReference>
<dbReference type="GO" id="GO:0005829">
    <property type="term" value="C:cytosol"/>
    <property type="evidence" value="ECO:0007669"/>
    <property type="project" value="TreeGrafter"/>
</dbReference>
<dbReference type="GO" id="GO:0051539">
    <property type="term" value="F:4 iron, 4 sulfur cluster binding"/>
    <property type="evidence" value="ECO:0007669"/>
    <property type="project" value="UniProtKB-KW"/>
</dbReference>
<dbReference type="GO" id="GO:0016830">
    <property type="term" value="F:carbon-carbon lyase activity"/>
    <property type="evidence" value="ECO:0007669"/>
    <property type="project" value="InterPro"/>
</dbReference>
<dbReference type="GO" id="GO:0008270">
    <property type="term" value="F:zinc ion binding"/>
    <property type="evidence" value="ECO:0007669"/>
    <property type="project" value="UniProtKB-UniRule"/>
</dbReference>
<dbReference type="GO" id="GO:0009228">
    <property type="term" value="P:thiamine biosynthetic process"/>
    <property type="evidence" value="ECO:0007669"/>
    <property type="project" value="UniProtKB-KW"/>
</dbReference>
<dbReference type="GO" id="GO:0009229">
    <property type="term" value="P:thiamine diphosphate biosynthetic process"/>
    <property type="evidence" value="ECO:0007669"/>
    <property type="project" value="UniProtKB-UniRule"/>
</dbReference>
<dbReference type="FunFam" id="3.20.20.540:FF:000001">
    <property type="entry name" value="Phosphomethylpyrimidine synthase"/>
    <property type="match status" value="1"/>
</dbReference>
<dbReference type="Gene3D" id="6.10.250.620">
    <property type="match status" value="1"/>
</dbReference>
<dbReference type="Gene3D" id="3.20.20.540">
    <property type="entry name" value="Radical SAM ThiC family, central domain"/>
    <property type="match status" value="1"/>
</dbReference>
<dbReference type="HAMAP" id="MF_00089">
    <property type="entry name" value="ThiC"/>
    <property type="match status" value="1"/>
</dbReference>
<dbReference type="InterPro" id="IPR037509">
    <property type="entry name" value="ThiC"/>
</dbReference>
<dbReference type="InterPro" id="IPR038521">
    <property type="entry name" value="ThiC/Bza_core_dom"/>
</dbReference>
<dbReference type="InterPro" id="IPR002817">
    <property type="entry name" value="ThiC/BzaA/B"/>
</dbReference>
<dbReference type="NCBIfam" id="NF009895">
    <property type="entry name" value="PRK13352.1"/>
    <property type="match status" value="1"/>
</dbReference>
<dbReference type="NCBIfam" id="TIGR00190">
    <property type="entry name" value="thiC"/>
    <property type="match status" value="1"/>
</dbReference>
<dbReference type="PANTHER" id="PTHR30557:SF1">
    <property type="entry name" value="PHOSPHOMETHYLPYRIMIDINE SYNTHASE, CHLOROPLASTIC"/>
    <property type="match status" value="1"/>
</dbReference>
<dbReference type="PANTHER" id="PTHR30557">
    <property type="entry name" value="THIAMINE BIOSYNTHESIS PROTEIN THIC"/>
    <property type="match status" value="1"/>
</dbReference>
<dbReference type="Pfam" id="PF01964">
    <property type="entry name" value="ThiC_Rad_SAM"/>
    <property type="match status" value="1"/>
</dbReference>
<dbReference type="SFLD" id="SFLDF00407">
    <property type="entry name" value="phosphomethylpyrimidine_syntha"/>
    <property type="match status" value="1"/>
</dbReference>
<dbReference type="SFLD" id="SFLDG01114">
    <property type="entry name" value="phosphomethylpyrimidine_syntha"/>
    <property type="match status" value="1"/>
</dbReference>
<dbReference type="SFLD" id="SFLDS00113">
    <property type="entry name" value="Radical_SAM_Phosphomethylpyrim"/>
    <property type="match status" value="1"/>
</dbReference>
<evidence type="ECO:0000255" key="1">
    <source>
        <dbReference type="HAMAP-Rule" id="MF_00089"/>
    </source>
</evidence>
<proteinExistence type="inferred from homology"/>
<reference key="1">
    <citation type="journal article" date="2007" name="Proc. Natl. Acad. Sci. U.S.A.">
        <title>The genome of Syntrophus aciditrophicus: life at the thermodynamic limit of microbial growth.</title>
        <authorList>
            <person name="McInerney M.J."/>
            <person name="Rohlin L."/>
            <person name="Mouttaki H."/>
            <person name="Kim U."/>
            <person name="Krupp R.S."/>
            <person name="Rios-Hernandez L."/>
            <person name="Sieber J."/>
            <person name="Struchtemeyer C.G."/>
            <person name="Bhattacharyya A."/>
            <person name="Campbell J.W."/>
            <person name="Gunsalus R.P."/>
        </authorList>
    </citation>
    <scope>NUCLEOTIDE SEQUENCE [LARGE SCALE GENOMIC DNA]</scope>
    <source>
        <strain>SB</strain>
    </source>
</reference>
<keyword id="KW-0004">4Fe-4S</keyword>
<keyword id="KW-0408">Iron</keyword>
<keyword id="KW-0411">Iron-sulfur</keyword>
<keyword id="KW-0456">Lyase</keyword>
<keyword id="KW-0479">Metal-binding</keyword>
<keyword id="KW-1185">Reference proteome</keyword>
<keyword id="KW-0949">S-adenosyl-L-methionine</keyword>
<keyword id="KW-0784">Thiamine biosynthesis</keyword>
<keyword id="KW-0862">Zinc</keyword>
<sequence length="427" mass="46086">MTQLEMAGQGRVTEEMKLCAEKEGVSPEFIRRGVEEGSIVVVRNNRHTGIAPLAIGKGLRTKVNANLGTSRDHVDLEMELEKVRICTKAGADALMDLSTGGEIRAIRQAIVNASTMAVGTVPIYAAAAEALNSRKSIMEMTADEMFQAIEENGEDGVDFITVHCGVTRESVGRIAAQGRLLGIVSRGGSITARWMDYNDAENPLYAQYDRLLEIARRYDMVLSLGDGLRPGCLADATDRGQVQELIILGELCRRARARDVQVMIEGPGHVPYPQIEANIALQKSLCEGAPFYVLGPLPTDIAPGYDHITAAIGGALAGAAGADFLCYVTPSEHLCLPNLDDVHEGIVASRIAAHIADIAKGYPGAMEKDILMAKYRSEFNWNGQIDLSVDPDRSRARLERSETAKEEGCTMCGDLCAIKLGKKKAPC</sequence>
<name>THIC_SYNAS</name>
<accession>Q2LSU0</accession>
<organism>
    <name type="scientific">Syntrophus aciditrophicus (strain SB)</name>
    <dbReference type="NCBI Taxonomy" id="56780"/>
    <lineage>
        <taxon>Bacteria</taxon>
        <taxon>Pseudomonadati</taxon>
        <taxon>Thermodesulfobacteriota</taxon>
        <taxon>Syntrophia</taxon>
        <taxon>Syntrophales</taxon>
        <taxon>Syntrophaceae</taxon>
        <taxon>Syntrophus</taxon>
    </lineage>
</organism>